<feature type="chain" id="PRO_1000077841" description="UvrABC system protein C">
    <location>
        <begin position="1"/>
        <end position="609"/>
    </location>
</feature>
<feature type="domain" description="GIY-YIG" evidence="1">
    <location>
        <begin position="16"/>
        <end position="94"/>
    </location>
</feature>
<feature type="domain" description="UVR" evidence="1">
    <location>
        <begin position="203"/>
        <end position="238"/>
    </location>
</feature>
<dbReference type="EMBL" id="CP000469">
    <property type="protein sequence ID" value="ABK47843.1"/>
    <property type="molecule type" value="Genomic_DNA"/>
</dbReference>
<dbReference type="RefSeq" id="WP_011716647.1">
    <property type="nucleotide sequence ID" value="NC_008577.1"/>
</dbReference>
<dbReference type="SMR" id="A0KVM4"/>
<dbReference type="STRING" id="94122.Shewana3_1609"/>
<dbReference type="KEGG" id="shn:Shewana3_1609"/>
<dbReference type="eggNOG" id="COG0322">
    <property type="taxonomic scope" value="Bacteria"/>
</dbReference>
<dbReference type="HOGENOM" id="CLU_014841_3_0_6"/>
<dbReference type="OrthoDB" id="9804933at2"/>
<dbReference type="Proteomes" id="UP000002589">
    <property type="component" value="Chromosome"/>
</dbReference>
<dbReference type="GO" id="GO:0005737">
    <property type="term" value="C:cytoplasm"/>
    <property type="evidence" value="ECO:0007669"/>
    <property type="project" value="UniProtKB-SubCell"/>
</dbReference>
<dbReference type="GO" id="GO:0009380">
    <property type="term" value="C:excinuclease repair complex"/>
    <property type="evidence" value="ECO:0007669"/>
    <property type="project" value="InterPro"/>
</dbReference>
<dbReference type="GO" id="GO:0003677">
    <property type="term" value="F:DNA binding"/>
    <property type="evidence" value="ECO:0007669"/>
    <property type="project" value="UniProtKB-UniRule"/>
</dbReference>
<dbReference type="GO" id="GO:0009381">
    <property type="term" value="F:excinuclease ABC activity"/>
    <property type="evidence" value="ECO:0007669"/>
    <property type="project" value="UniProtKB-UniRule"/>
</dbReference>
<dbReference type="GO" id="GO:0006289">
    <property type="term" value="P:nucleotide-excision repair"/>
    <property type="evidence" value="ECO:0007669"/>
    <property type="project" value="UniProtKB-UniRule"/>
</dbReference>
<dbReference type="GO" id="GO:0009432">
    <property type="term" value="P:SOS response"/>
    <property type="evidence" value="ECO:0007669"/>
    <property type="project" value="UniProtKB-UniRule"/>
</dbReference>
<dbReference type="CDD" id="cd10434">
    <property type="entry name" value="GIY-YIG_UvrC_Cho"/>
    <property type="match status" value="1"/>
</dbReference>
<dbReference type="FunFam" id="1.10.150.20:FF:000005">
    <property type="entry name" value="UvrABC system protein C"/>
    <property type="match status" value="1"/>
</dbReference>
<dbReference type="FunFam" id="3.30.420.340:FF:000001">
    <property type="entry name" value="UvrABC system protein C"/>
    <property type="match status" value="1"/>
</dbReference>
<dbReference type="FunFam" id="3.40.1440.10:FF:000001">
    <property type="entry name" value="UvrABC system protein C"/>
    <property type="match status" value="1"/>
</dbReference>
<dbReference type="Gene3D" id="1.10.150.20">
    <property type="entry name" value="5' to 3' exonuclease, C-terminal subdomain"/>
    <property type="match status" value="1"/>
</dbReference>
<dbReference type="Gene3D" id="3.40.1440.10">
    <property type="entry name" value="GIY-YIG endonuclease"/>
    <property type="match status" value="1"/>
</dbReference>
<dbReference type="Gene3D" id="4.10.860.10">
    <property type="entry name" value="UVR domain"/>
    <property type="match status" value="1"/>
</dbReference>
<dbReference type="Gene3D" id="3.30.420.340">
    <property type="entry name" value="UvrC, RNAse H endonuclease domain"/>
    <property type="match status" value="1"/>
</dbReference>
<dbReference type="HAMAP" id="MF_00203">
    <property type="entry name" value="UvrC"/>
    <property type="match status" value="1"/>
</dbReference>
<dbReference type="InterPro" id="IPR000305">
    <property type="entry name" value="GIY-YIG_endonuc"/>
</dbReference>
<dbReference type="InterPro" id="IPR035901">
    <property type="entry name" value="GIY-YIG_endonuc_sf"/>
</dbReference>
<dbReference type="InterPro" id="IPR047296">
    <property type="entry name" value="GIY-YIG_UvrC_Cho"/>
</dbReference>
<dbReference type="InterPro" id="IPR003583">
    <property type="entry name" value="Hlx-hairpin-Hlx_DNA-bd_motif"/>
</dbReference>
<dbReference type="InterPro" id="IPR010994">
    <property type="entry name" value="RuvA_2-like"/>
</dbReference>
<dbReference type="InterPro" id="IPR001943">
    <property type="entry name" value="UVR_dom"/>
</dbReference>
<dbReference type="InterPro" id="IPR036876">
    <property type="entry name" value="UVR_dom_sf"/>
</dbReference>
<dbReference type="InterPro" id="IPR050066">
    <property type="entry name" value="UvrABC_protein_C"/>
</dbReference>
<dbReference type="InterPro" id="IPR004791">
    <property type="entry name" value="UvrC"/>
</dbReference>
<dbReference type="InterPro" id="IPR001162">
    <property type="entry name" value="UvrC_RNase_H_dom"/>
</dbReference>
<dbReference type="InterPro" id="IPR038476">
    <property type="entry name" value="UvrC_RNase_H_dom_sf"/>
</dbReference>
<dbReference type="NCBIfam" id="TIGR00194">
    <property type="entry name" value="uvrC"/>
    <property type="match status" value="1"/>
</dbReference>
<dbReference type="PANTHER" id="PTHR30562:SF1">
    <property type="entry name" value="UVRABC SYSTEM PROTEIN C"/>
    <property type="match status" value="1"/>
</dbReference>
<dbReference type="PANTHER" id="PTHR30562">
    <property type="entry name" value="UVRC/OXIDOREDUCTASE"/>
    <property type="match status" value="1"/>
</dbReference>
<dbReference type="Pfam" id="PF01541">
    <property type="entry name" value="GIY-YIG"/>
    <property type="match status" value="1"/>
</dbReference>
<dbReference type="Pfam" id="PF14520">
    <property type="entry name" value="HHH_5"/>
    <property type="match status" value="1"/>
</dbReference>
<dbReference type="Pfam" id="PF02151">
    <property type="entry name" value="UVR"/>
    <property type="match status" value="1"/>
</dbReference>
<dbReference type="Pfam" id="PF22920">
    <property type="entry name" value="UvrC_RNaseH"/>
    <property type="match status" value="1"/>
</dbReference>
<dbReference type="Pfam" id="PF08459">
    <property type="entry name" value="UvrC_RNaseH_dom"/>
    <property type="match status" value="1"/>
</dbReference>
<dbReference type="SMART" id="SM00465">
    <property type="entry name" value="GIYc"/>
    <property type="match status" value="1"/>
</dbReference>
<dbReference type="SMART" id="SM00278">
    <property type="entry name" value="HhH1"/>
    <property type="match status" value="2"/>
</dbReference>
<dbReference type="SUPFAM" id="SSF46600">
    <property type="entry name" value="C-terminal UvrC-binding domain of UvrB"/>
    <property type="match status" value="1"/>
</dbReference>
<dbReference type="SUPFAM" id="SSF82771">
    <property type="entry name" value="GIY-YIG endonuclease"/>
    <property type="match status" value="1"/>
</dbReference>
<dbReference type="SUPFAM" id="SSF47781">
    <property type="entry name" value="RuvA domain 2-like"/>
    <property type="match status" value="1"/>
</dbReference>
<dbReference type="PROSITE" id="PS50164">
    <property type="entry name" value="GIY_YIG"/>
    <property type="match status" value="1"/>
</dbReference>
<dbReference type="PROSITE" id="PS50151">
    <property type="entry name" value="UVR"/>
    <property type="match status" value="1"/>
</dbReference>
<dbReference type="PROSITE" id="PS50165">
    <property type="entry name" value="UVRC"/>
    <property type="match status" value="1"/>
</dbReference>
<name>UVRC_SHESA</name>
<evidence type="ECO:0000255" key="1">
    <source>
        <dbReference type="HAMAP-Rule" id="MF_00203"/>
    </source>
</evidence>
<reference key="1">
    <citation type="submission" date="2006-09" db="EMBL/GenBank/DDBJ databases">
        <title>Complete sequence of chromosome 1 of Shewanella sp. ANA-3.</title>
        <authorList>
            <person name="Copeland A."/>
            <person name="Lucas S."/>
            <person name="Lapidus A."/>
            <person name="Barry K."/>
            <person name="Detter J.C."/>
            <person name="Glavina del Rio T."/>
            <person name="Hammon N."/>
            <person name="Israni S."/>
            <person name="Dalin E."/>
            <person name="Tice H."/>
            <person name="Pitluck S."/>
            <person name="Chertkov O."/>
            <person name="Brettin T."/>
            <person name="Bruce D."/>
            <person name="Han C."/>
            <person name="Tapia R."/>
            <person name="Gilna P."/>
            <person name="Schmutz J."/>
            <person name="Larimer F."/>
            <person name="Land M."/>
            <person name="Hauser L."/>
            <person name="Kyrpides N."/>
            <person name="Kim E."/>
            <person name="Newman D."/>
            <person name="Salticov C."/>
            <person name="Konstantinidis K."/>
            <person name="Klappenback J."/>
            <person name="Tiedje J."/>
            <person name="Richardson P."/>
        </authorList>
    </citation>
    <scope>NUCLEOTIDE SEQUENCE [LARGE SCALE GENOMIC DNA]</scope>
    <source>
        <strain>ANA-3</strain>
    </source>
</reference>
<gene>
    <name evidence="1" type="primary">uvrC</name>
    <name type="ordered locus">Shewana3_1609</name>
</gene>
<comment type="function">
    <text evidence="1">The UvrABC repair system catalyzes the recognition and processing of DNA lesions. UvrC both incises the 5' and 3' sides of the lesion. The N-terminal half is responsible for the 3' incision and the C-terminal half is responsible for the 5' incision.</text>
</comment>
<comment type="subunit">
    <text evidence="1">Interacts with UvrB in an incision complex.</text>
</comment>
<comment type="subcellular location">
    <subcellularLocation>
        <location evidence="1">Cytoplasm</location>
    </subcellularLocation>
</comment>
<comment type="similarity">
    <text evidence="1">Belongs to the UvrC family.</text>
</comment>
<keyword id="KW-0963">Cytoplasm</keyword>
<keyword id="KW-0227">DNA damage</keyword>
<keyword id="KW-0228">DNA excision</keyword>
<keyword id="KW-0234">DNA repair</keyword>
<keyword id="KW-0267">Excision nuclease</keyword>
<keyword id="KW-0742">SOS response</keyword>
<accession>A0KVM4</accession>
<organism>
    <name type="scientific">Shewanella sp. (strain ANA-3)</name>
    <dbReference type="NCBI Taxonomy" id="94122"/>
    <lineage>
        <taxon>Bacteria</taxon>
        <taxon>Pseudomonadati</taxon>
        <taxon>Pseudomonadota</taxon>
        <taxon>Gammaproteobacteria</taxon>
        <taxon>Alteromonadales</taxon>
        <taxon>Shewanellaceae</taxon>
        <taxon>Shewanella</taxon>
    </lineage>
</organism>
<protein>
    <recommendedName>
        <fullName evidence="1">UvrABC system protein C</fullName>
        <shortName evidence="1">Protein UvrC</shortName>
    </recommendedName>
    <alternativeName>
        <fullName evidence="1">Excinuclease ABC subunit C</fullName>
    </alternativeName>
</protein>
<proteinExistence type="inferred from homology"/>
<sequence>MSTGFNAQSFLRMVSSSAGVYRMYDVKGDVIYVGKAKDLKKRLSSYFRKNLGNVKTQALVSHIHHIDVTLTHSETDALLLENDYIKQYMPKYNVLLRDDKSYPYIFLSQHEHPRLAYHRGPQREKGYYFGPYPNGGAVRESLHLMQKLFPIRQCDDLYYKSRTRPCLQYQLSRCSAPCVGKVSNAEYDEQVKLASLFLKGKDKQVISELVAKMEEAAGQQAYEQAARFRDQIMALRRVAEQQEVSGNTGDMDVIGVHYASGIACFHLLFIREGKIFGSRSYYPTVPAQTDIEEVLRSFLLQFYLNADIQRTIPKEVVISHHFEELHELEAAVSEALNKKFSIKTNVRADRASFLRLALTNATNAVMTRLSHKNTVEQRFVLLEEILELNAPIQRMECFDISHTMGESTVASCVVFNREGPHKAEYRRYNIEGITPGDDYAAMKQAISRRFDKIDASGKIPDILFIDGGLGQLRIAQQIVDEKFVNLDKAPQLIGVAKGESRKPGLETLIFGDTETSFSLEDDSPALHLIQHIRDESHRFAITGHRNRRQKTRNTSTLESIPGIGPKRRKALLQHLGGLQEVKGASVAELAKVPGISIEMAQTIHDALRG</sequence>